<proteinExistence type="evidence at protein level"/>
<gene>
    <name evidence="18" type="primary">Inppl1</name>
    <name evidence="15" type="synonym">Ship2</name>
</gene>
<evidence type="ECO:0000250" key="1"/>
<evidence type="ECO:0000250" key="2">
    <source>
        <dbReference type="UniProtKB" id="D7PF45"/>
    </source>
</evidence>
<evidence type="ECO:0000250" key="3">
    <source>
        <dbReference type="UniProtKB" id="F1PNY0"/>
    </source>
</evidence>
<evidence type="ECO:0000250" key="4">
    <source>
        <dbReference type="UniProtKB" id="O15357"/>
    </source>
</evidence>
<evidence type="ECO:0000250" key="5">
    <source>
        <dbReference type="UniProtKB" id="Q6P549"/>
    </source>
</evidence>
<evidence type="ECO:0000250" key="6">
    <source>
        <dbReference type="UniProtKB" id="Q9ES52"/>
    </source>
</evidence>
<evidence type="ECO:0000255" key="7">
    <source>
        <dbReference type="PROSITE-ProRule" id="PRU00184"/>
    </source>
</evidence>
<evidence type="ECO:0000255" key="8">
    <source>
        <dbReference type="PROSITE-ProRule" id="PRU00191"/>
    </source>
</evidence>
<evidence type="ECO:0000256" key="9">
    <source>
        <dbReference type="SAM" id="MobiDB-lite"/>
    </source>
</evidence>
<evidence type="ECO:0000269" key="10">
    <source>
    </source>
</evidence>
<evidence type="ECO:0000269" key="11">
    <source>
    </source>
</evidence>
<evidence type="ECO:0000269" key="12">
    <source>
    </source>
</evidence>
<evidence type="ECO:0000269" key="13">
    <source>
    </source>
</evidence>
<evidence type="ECO:0000269" key="14">
    <source>
    </source>
</evidence>
<evidence type="ECO:0000303" key="15">
    <source>
    </source>
</evidence>
<evidence type="ECO:0000305" key="16"/>
<evidence type="ECO:0000305" key="17">
    <source>
    </source>
</evidence>
<evidence type="ECO:0000312" key="18">
    <source>
        <dbReference type="RGD" id="68396"/>
    </source>
</evidence>
<evidence type="ECO:0007744" key="19">
    <source>
    </source>
</evidence>
<reference key="1">
    <citation type="journal article" date="1999" name="Biochem. Biophys. Res. Commun.">
        <title>Molecular cloning of rat SH2-containing inositol phosphatase 2 (SHIP2) and its role in the regulation of insulin signaling.</title>
        <authorList>
            <person name="Ishihara H."/>
            <person name="Sasaoka T."/>
            <person name="Hori H."/>
            <person name="Wada T."/>
            <person name="Hirai H."/>
            <person name="Haruta T."/>
            <person name="Kobayashi M."/>
        </authorList>
    </citation>
    <scope>NUCLEOTIDE SEQUENCE [MRNA] (ISOFORM 2)</scope>
    <scope>FUNCTION</scope>
    <scope>PHOSPHORYLATION</scope>
    <source>
        <strain>Sprague-Dawley</strain>
    </source>
</reference>
<reference key="2">
    <citation type="journal article" date="2000" name="Brain Res. Mol. Brain Res.">
        <title>Localization of mRNA for SHIP2, SH2 domain-containing inositol polyphosphate 5-phosphatase, in the brain of developing and mature rats.</title>
        <authorList>
            <person name="Kudo M."/>
            <person name="Saito S."/>
            <person name="Owada Y."/>
            <person name="Suzaki H."/>
            <person name="Kondo H."/>
        </authorList>
    </citation>
    <scope>NUCLEOTIDE SEQUENCE [MRNA] (ISOFORM 1)</scope>
    <source>
        <tissue>Brain</tissue>
    </source>
</reference>
<reference key="3">
    <citation type="journal article" date="2001" name="Mol. Cell. Biol.">
        <title>Overexpression of SH2-containing inositol phosphatase 2 results in negative regulation of insulin-induced metabolic actions in 3T3-L1 adipocytes via its 5'-phosphatase catalytic activity.</title>
        <authorList>
            <person name="Wada T."/>
            <person name="Sasaoka T."/>
            <person name="Funaki M."/>
            <person name="Hori H."/>
            <person name="Murakami S."/>
            <person name="Ishiki M."/>
            <person name="Haruta T."/>
            <person name="Asano T."/>
            <person name="Ogawa W."/>
            <person name="Ishihara H."/>
            <person name="Kobayashi M."/>
        </authorList>
    </citation>
    <scope>FUNCTION</scope>
    <scope>CATALYTIC ACTIVITY</scope>
</reference>
<reference key="4">
    <citation type="journal article" date="2002" name="Mol. Endocrinol.">
        <title>Membrane localization of Src homology 2-containing inositol 5'-phosphatase 2 via Shc association is required for the negative regulation of insulin signaling in Rat1 fibroblasts overexpressing insulin receptors.</title>
        <authorList>
            <person name="Ishihara H."/>
            <person name="Sasaoka T."/>
            <person name="Ishiki M."/>
            <person name="Wada T."/>
            <person name="Hori H."/>
            <person name="Kagawa S."/>
            <person name="Kobayashi M."/>
        </authorList>
    </citation>
    <scope>FUNCTION</scope>
    <scope>SUBCELLULAR LOCATION</scope>
    <scope>MUTAGENESIS OF TYR-987</scope>
</reference>
<reference key="5">
    <citation type="journal article" date="2007" name="J. Cell Biol.">
        <title>An essential role for the SHIP2-dependent negative feedback loop in neuritogenesis of nerve growth factor-stimulated PC12 cells.</title>
        <authorList>
            <person name="Aoki K."/>
            <person name="Nakamura T."/>
            <person name="Inoue T."/>
            <person name="Meyer T."/>
            <person name="Matsuda M."/>
        </authorList>
    </citation>
    <scope>FUNCTION</scope>
</reference>
<reference key="6">
    <citation type="journal article" date="2012" name="Nat. Commun.">
        <title>Quantitative maps of protein phosphorylation sites across 14 different rat organs and tissues.</title>
        <authorList>
            <person name="Lundby A."/>
            <person name="Secher A."/>
            <person name="Lage K."/>
            <person name="Nordsborg N.B."/>
            <person name="Dmytriyev A."/>
            <person name="Lundby C."/>
            <person name="Olsen J.V."/>
        </authorList>
    </citation>
    <scope>PHOSPHORYLATION [LARGE SCALE ANALYSIS] AT SER-132</scope>
    <scope>IDENTIFICATION BY MASS SPECTROMETRY [LARGE SCALE ANALYSIS]</scope>
</reference>
<reference key="7">
    <citation type="journal article" date="2002" name="Diabetes">
        <title>The gene INPPL1, encoding the lipid phosphatase SHIP2, is a candidate for type 2 diabetes in rat and man.</title>
        <authorList>
            <person name="Marion E."/>
            <person name="Kaisaki P.J."/>
            <person name="Pouillon V."/>
            <person name="Gueydan C."/>
            <person name="Levy J.C."/>
            <person name="Bodson A."/>
            <person name="Krzentowski G."/>
            <person name="Daubresse J.-C."/>
            <person name="Mockel J."/>
            <person name="Behrends J."/>
            <person name="Servais G."/>
            <person name="Szpirer C."/>
            <person name="Kruys V."/>
            <person name="Gauguier D."/>
            <person name="Schurmans S."/>
        </authorList>
    </citation>
    <scope>VARIANT CYS-1142</scope>
    <scope>POLYMORPHISM</scope>
</reference>
<organism>
    <name type="scientific">Rattus norvegicus</name>
    <name type="common">Rat</name>
    <dbReference type="NCBI Taxonomy" id="10116"/>
    <lineage>
        <taxon>Eukaryota</taxon>
        <taxon>Metazoa</taxon>
        <taxon>Chordata</taxon>
        <taxon>Craniata</taxon>
        <taxon>Vertebrata</taxon>
        <taxon>Euteleostomi</taxon>
        <taxon>Mammalia</taxon>
        <taxon>Eutheria</taxon>
        <taxon>Euarchontoglires</taxon>
        <taxon>Glires</taxon>
        <taxon>Rodentia</taxon>
        <taxon>Myomorpha</taxon>
        <taxon>Muroidea</taxon>
        <taxon>Muridae</taxon>
        <taxon>Murinae</taxon>
        <taxon>Rattus</taxon>
    </lineage>
</organism>
<keyword id="KW-0009">Actin-binding</keyword>
<keyword id="KW-0025">Alternative splicing</keyword>
<keyword id="KW-0130">Cell adhesion</keyword>
<keyword id="KW-1003">Cell membrane</keyword>
<keyword id="KW-0966">Cell projection</keyword>
<keyword id="KW-0963">Cytoplasm</keyword>
<keyword id="KW-0206">Cytoskeleton</keyword>
<keyword id="KW-0378">Hydrolase</keyword>
<keyword id="KW-0391">Immunity</keyword>
<keyword id="KW-0443">Lipid metabolism</keyword>
<keyword id="KW-0472">Membrane</keyword>
<keyword id="KW-0539">Nucleus</keyword>
<keyword id="KW-0597">Phosphoprotein</keyword>
<keyword id="KW-1185">Reference proteome</keyword>
<keyword id="KW-0727">SH2 domain</keyword>
<keyword id="KW-0729">SH3-binding</keyword>
<protein>
    <recommendedName>
        <fullName evidence="16">Phosphatidylinositol 3,4,5-trisphosphate 5-phosphatase 2</fullName>
        <ecNumber evidence="11">3.1.3.86</ecNumber>
    </recommendedName>
    <alternativeName>
        <fullName evidence="4">Inositol polyphosphate phosphatase-like protein 1</fullName>
        <shortName evidence="4">INPPL-1</shortName>
    </alternativeName>
    <alternativeName>
        <fullName evidence="4">Protein 51C</fullName>
    </alternativeName>
    <alternativeName>
        <fullName evidence="4">SH2 domain-containing inositol 5'-phosphatase 2</fullName>
        <shortName evidence="4">SH2 domain-containing inositol phosphatase 2</shortName>
        <shortName evidence="4">SHIP-2</shortName>
    </alternativeName>
</protein>
<dbReference type="EC" id="3.1.3.86" evidence="11"/>
<dbReference type="EMBL" id="AB011439">
    <property type="protein sequence ID" value="BAA81818.1"/>
    <property type="molecule type" value="mRNA"/>
</dbReference>
<dbReference type="EMBL" id="AB025794">
    <property type="protein sequence ID" value="BAA82308.1"/>
    <property type="molecule type" value="mRNA"/>
</dbReference>
<dbReference type="RefSeq" id="NP_001257772.1">
    <molecule id="Q9WVR3-2"/>
    <property type="nucleotide sequence ID" value="NM_001270843.1"/>
</dbReference>
<dbReference type="RefSeq" id="NP_075233.1">
    <molecule id="Q9WVR3-1"/>
    <property type="nucleotide sequence ID" value="NM_022944.2"/>
</dbReference>
<dbReference type="BMRB" id="Q9WVR3"/>
<dbReference type="SMR" id="Q9WVR3"/>
<dbReference type="FunCoup" id="Q9WVR3">
    <property type="interactions" value="1409"/>
</dbReference>
<dbReference type="IntAct" id="Q9WVR3">
    <property type="interactions" value="2"/>
</dbReference>
<dbReference type="STRING" id="10116.ENSRNOP00000061371"/>
<dbReference type="BindingDB" id="Q9WVR3"/>
<dbReference type="ChEMBL" id="CHEMBL2331062"/>
<dbReference type="iPTMnet" id="Q9WVR3"/>
<dbReference type="PhosphoSitePlus" id="Q9WVR3"/>
<dbReference type="jPOST" id="Q9WVR3"/>
<dbReference type="PaxDb" id="10116-ENSRNOP00000061371"/>
<dbReference type="Ensembl" id="ENSRNOT00000066915.4">
    <molecule id="Q9WVR3-2"/>
    <property type="protein sequence ID" value="ENSRNOP00000061371.4"/>
    <property type="gene ID" value="ENSRNOG00000019730.8"/>
</dbReference>
<dbReference type="GeneID" id="65038"/>
<dbReference type="KEGG" id="rno:65038"/>
<dbReference type="UCSC" id="RGD:68396">
    <molecule id="Q9WVR3-1"/>
    <property type="organism name" value="rat"/>
</dbReference>
<dbReference type="AGR" id="RGD:68396"/>
<dbReference type="CTD" id="3636"/>
<dbReference type="RGD" id="68396">
    <property type="gene designation" value="Inppl1"/>
</dbReference>
<dbReference type="eggNOG" id="KOG0565">
    <property type="taxonomic scope" value="Eukaryota"/>
</dbReference>
<dbReference type="eggNOG" id="KOG4384">
    <property type="taxonomic scope" value="Eukaryota"/>
</dbReference>
<dbReference type="InParanoid" id="Q9WVR3"/>
<dbReference type="OrthoDB" id="58701at9989"/>
<dbReference type="PhylomeDB" id="Q9WVR3"/>
<dbReference type="TreeFam" id="TF323475"/>
<dbReference type="Reactome" id="R-RNO-1660499">
    <property type="pathway name" value="Synthesis of PIPs at the plasma membrane"/>
</dbReference>
<dbReference type="Reactome" id="R-RNO-1855204">
    <property type="pathway name" value="Synthesis of IP3 and IP4 in the cytosol"/>
</dbReference>
<dbReference type="Reactome" id="R-RNO-912526">
    <property type="pathway name" value="Interleukin receptor SHC signaling"/>
</dbReference>
<dbReference type="PRO" id="PR:Q9WVR3"/>
<dbReference type="Proteomes" id="UP000002494">
    <property type="component" value="Chromosome 1"/>
</dbReference>
<dbReference type="GO" id="GO:0009925">
    <property type="term" value="C:basal plasma membrane"/>
    <property type="evidence" value="ECO:0000250"/>
    <property type="project" value="UniProtKB"/>
</dbReference>
<dbReference type="GO" id="GO:0005737">
    <property type="term" value="C:cytoplasm"/>
    <property type="evidence" value="ECO:0000266"/>
    <property type="project" value="RGD"/>
</dbReference>
<dbReference type="GO" id="GO:0005829">
    <property type="term" value="C:cytosol"/>
    <property type="evidence" value="ECO:0000318"/>
    <property type="project" value="GO_Central"/>
</dbReference>
<dbReference type="GO" id="GO:0030175">
    <property type="term" value="C:filopodium"/>
    <property type="evidence" value="ECO:0007669"/>
    <property type="project" value="UniProtKB-SubCell"/>
</dbReference>
<dbReference type="GO" id="GO:0030027">
    <property type="term" value="C:lamellipodium"/>
    <property type="evidence" value="ECO:0000314"/>
    <property type="project" value="RGD"/>
</dbReference>
<dbReference type="GO" id="GO:0016607">
    <property type="term" value="C:nuclear speck"/>
    <property type="evidence" value="ECO:0000250"/>
    <property type="project" value="UniProtKB"/>
</dbReference>
<dbReference type="GO" id="GO:0005634">
    <property type="term" value="C:nucleus"/>
    <property type="evidence" value="ECO:0000250"/>
    <property type="project" value="UniProtKB"/>
</dbReference>
<dbReference type="GO" id="GO:0005886">
    <property type="term" value="C:plasma membrane"/>
    <property type="evidence" value="ECO:0000266"/>
    <property type="project" value="RGD"/>
</dbReference>
<dbReference type="GO" id="GO:0000922">
    <property type="term" value="C:spindle pole"/>
    <property type="evidence" value="ECO:0000250"/>
    <property type="project" value="UniProtKB"/>
</dbReference>
<dbReference type="GO" id="GO:0003779">
    <property type="term" value="F:actin binding"/>
    <property type="evidence" value="ECO:0007669"/>
    <property type="project" value="UniProtKB-KW"/>
</dbReference>
<dbReference type="GO" id="GO:0004445">
    <property type="term" value="F:inositol-polyphosphate 5-phosphatase activity"/>
    <property type="evidence" value="ECO:0000314"/>
    <property type="project" value="RGD"/>
</dbReference>
<dbReference type="GO" id="GO:0034485">
    <property type="term" value="F:phosphatidylinositol-3,4,5-trisphosphate 5-phosphatase activity"/>
    <property type="evidence" value="ECO:0007669"/>
    <property type="project" value="UniProtKB-EC"/>
</dbReference>
<dbReference type="GO" id="GO:0005547">
    <property type="term" value="F:phosphatidylinositol-3,4,5-trisphosphate binding"/>
    <property type="evidence" value="ECO:0000314"/>
    <property type="project" value="RGD"/>
</dbReference>
<dbReference type="GO" id="GO:0042169">
    <property type="term" value="F:SH2 domain binding"/>
    <property type="evidence" value="ECO:0000266"/>
    <property type="project" value="RGD"/>
</dbReference>
<dbReference type="GO" id="GO:0017124">
    <property type="term" value="F:SH3 domain binding"/>
    <property type="evidence" value="ECO:0007669"/>
    <property type="project" value="UniProtKB-KW"/>
</dbReference>
<dbReference type="GO" id="GO:0007015">
    <property type="term" value="P:actin filament organization"/>
    <property type="evidence" value="ECO:0000266"/>
    <property type="project" value="RGD"/>
</dbReference>
<dbReference type="GO" id="GO:0006915">
    <property type="term" value="P:apoptotic process"/>
    <property type="evidence" value="ECO:0000266"/>
    <property type="project" value="RGD"/>
</dbReference>
<dbReference type="GO" id="GO:0007155">
    <property type="term" value="P:cell adhesion"/>
    <property type="evidence" value="ECO:0007669"/>
    <property type="project" value="UniProtKB-KW"/>
</dbReference>
<dbReference type="GO" id="GO:0001958">
    <property type="term" value="P:endochondral ossification"/>
    <property type="evidence" value="ECO:0000250"/>
    <property type="project" value="UniProtKB"/>
</dbReference>
<dbReference type="GO" id="GO:0006897">
    <property type="term" value="P:endocytosis"/>
    <property type="evidence" value="ECO:0000266"/>
    <property type="project" value="RGD"/>
</dbReference>
<dbReference type="GO" id="GO:0070371">
    <property type="term" value="P:ERK1 and ERK2 cascade"/>
    <property type="evidence" value="ECO:0000266"/>
    <property type="project" value="RGD"/>
</dbReference>
<dbReference type="GO" id="GO:0000132">
    <property type="term" value="P:establishment of mitotic spindle orientation"/>
    <property type="evidence" value="ECO:0000250"/>
    <property type="project" value="UniProtKB"/>
</dbReference>
<dbReference type="GO" id="GO:0010467">
    <property type="term" value="P:gene expression"/>
    <property type="evidence" value="ECO:0000266"/>
    <property type="project" value="RGD"/>
</dbReference>
<dbReference type="GO" id="GO:0006006">
    <property type="term" value="P:glucose metabolic process"/>
    <property type="evidence" value="ECO:0000266"/>
    <property type="project" value="RGD"/>
</dbReference>
<dbReference type="GO" id="GO:0002376">
    <property type="term" value="P:immune system process"/>
    <property type="evidence" value="ECO:0007669"/>
    <property type="project" value="UniProtKB-KW"/>
</dbReference>
<dbReference type="GO" id="GO:0032957">
    <property type="term" value="P:inositol trisphosphate metabolic process"/>
    <property type="evidence" value="ECO:0000314"/>
    <property type="project" value="RGD"/>
</dbReference>
<dbReference type="GO" id="GO:0006629">
    <property type="term" value="P:lipid metabolic process"/>
    <property type="evidence" value="ECO:0000266"/>
    <property type="project" value="RGD"/>
</dbReference>
<dbReference type="GO" id="GO:0008285">
    <property type="term" value="P:negative regulation of cell population proliferation"/>
    <property type="evidence" value="ECO:0000266"/>
    <property type="project" value="RGD"/>
</dbReference>
<dbReference type="GO" id="GO:0008156">
    <property type="term" value="P:negative regulation of DNA replication"/>
    <property type="evidence" value="ECO:0000315"/>
    <property type="project" value="RGD"/>
</dbReference>
<dbReference type="GO" id="GO:0010629">
    <property type="term" value="P:negative regulation of gene expression"/>
    <property type="evidence" value="ECO:0000266"/>
    <property type="project" value="RGD"/>
</dbReference>
<dbReference type="GO" id="GO:0046627">
    <property type="term" value="P:negative regulation of insulin receptor signaling pathway"/>
    <property type="evidence" value="ECO:0000315"/>
    <property type="project" value="RGD"/>
</dbReference>
<dbReference type="GO" id="GO:0043569">
    <property type="term" value="P:negative regulation of insulin-like growth factor receptor signaling pathway"/>
    <property type="evidence" value="ECO:0000315"/>
    <property type="project" value="RGD"/>
</dbReference>
<dbReference type="GO" id="GO:0010977">
    <property type="term" value="P:negative regulation of neuron projection development"/>
    <property type="evidence" value="ECO:0000315"/>
    <property type="project" value="RGD"/>
</dbReference>
<dbReference type="GO" id="GO:0010642">
    <property type="term" value="P:negative regulation of platelet-derived growth factor receptor signaling pathway"/>
    <property type="evidence" value="ECO:0000315"/>
    <property type="project" value="RGD"/>
</dbReference>
<dbReference type="GO" id="GO:0043491">
    <property type="term" value="P:phosphatidylinositol 3-kinase/protein kinase B signal transduction"/>
    <property type="evidence" value="ECO:0000266"/>
    <property type="project" value="RGD"/>
</dbReference>
<dbReference type="GO" id="GO:0006661">
    <property type="term" value="P:phosphatidylinositol biosynthetic process"/>
    <property type="evidence" value="ECO:0000266"/>
    <property type="project" value="RGD"/>
</dbReference>
<dbReference type="GO" id="GO:0046856">
    <property type="term" value="P:phosphatidylinositol dephosphorylation"/>
    <property type="evidence" value="ECO:0007669"/>
    <property type="project" value="InterPro"/>
</dbReference>
<dbReference type="GO" id="GO:0009791">
    <property type="term" value="P:post-embryonic development"/>
    <property type="evidence" value="ECO:0000266"/>
    <property type="project" value="RGD"/>
</dbReference>
<dbReference type="GO" id="GO:0110053">
    <property type="term" value="P:regulation of actin filament organization"/>
    <property type="evidence" value="ECO:0000250"/>
    <property type="project" value="UniProtKB"/>
</dbReference>
<dbReference type="GO" id="GO:0050776">
    <property type="term" value="P:regulation of immune response"/>
    <property type="evidence" value="ECO:0000318"/>
    <property type="project" value="GO_Central"/>
</dbReference>
<dbReference type="GO" id="GO:0032880">
    <property type="term" value="P:regulation of protein localization"/>
    <property type="evidence" value="ECO:0000250"/>
    <property type="project" value="UniProtKB"/>
</dbReference>
<dbReference type="GO" id="GO:0032868">
    <property type="term" value="P:response to insulin"/>
    <property type="evidence" value="ECO:0000266"/>
    <property type="project" value="RGD"/>
</dbReference>
<dbReference type="GO" id="GO:0009410">
    <property type="term" value="P:response to xenobiotic stimulus"/>
    <property type="evidence" value="ECO:0000270"/>
    <property type="project" value="RGD"/>
</dbReference>
<dbReference type="GO" id="GO:0097178">
    <property type="term" value="P:ruffle assembly"/>
    <property type="evidence" value="ECO:0000266"/>
    <property type="project" value="RGD"/>
</dbReference>
<dbReference type="CDD" id="cd09101">
    <property type="entry name" value="INPP5c_SHIP2-INPPL1"/>
    <property type="match status" value="1"/>
</dbReference>
<dbReference type="CDD" id="cd09491">
    <property type="entry name" value="SAM_Ship2"/>
    <property type="match status" value="1"/>
</dbReference>
<dbReference type="CDD" id="cd10343">
    <property type="entry name" value="SH2_SHIP"/>
    <property type="match status" value="1"/>
</dbReference>
<dbReference type="FunFam" id="3.30.505.10:FF:000035">
    <property type="entry name" value="phosphatidylinositol 3,4,5-trisphosphate 5-phosphatase 1"/>
    <property type="match status" value="1"/>
</dbReference>
<dbReference type="FunFam" id="3.60.10.10:FF:000005">
    <property type="entry name" value="phosphatidylinositol 3,4,5-trisphosphate 5-phosphatase 1"/>
    <property type="match status" value="1"/>
</dbReference>
<dbReference type="FunFam" id="1.10.150.50:FF:000049">
    <property type="entry name" value="phosphatidylinositol 3,4,5-trisphosphate 5-phosphatase 2"/>
    <property type="match status" value="1"/>
</dbReference>
<dbReference type="Gene3D" id="3.60.10.10">
    <property type="entry name" value="Endonuclease/exonuclease/phosphatase"/>
    <property type="match status" value="1"/>
</dbReference>
<dbReference type="Gene3D" id="3.30.505.10">
    <property type="entry name" value="SH2 domain"/>
    <property type="match status" value="1"/>
</dbReference>
<dbReference type="Gene3D" id="1.10.150.50">
    <property type="entry name" value="Transcription Factor, Ets-1"/>
    <property type="match status" value="1"/>
</dbReference>
<dbReference type="InterPro" id="IPR036691">
    <property type="entry name" value="Endo/exonu/phosph_ase_sf"/>
</dbReference>
<dbReference type="InterPro" id="IPR000300">
    <property type="entry name" value="IPPc"/>
</dbReference>
<dbReference type="InterPro" id="IPR001660">
    <property type="entry name" value="SAM"/>
</dbReference>
<dbReference type="InterPro" id="IPR013761">
    <property type="entry name" value="SAM/pointed_sf"/>
</dbReference>
<dbReference type="InterPro" id="IPR000980">
    <property type="entry name" value="SH2"/>
</dbReference>
<dbReference type="InterPro" id="IPR036860">
    <property type="entry name" value="SH2_dom_sf"/>
</dbReference>
<dbReference type="PANTHER" id="PTHR46051:SF2">
    <property type="entry name" value="PHOSPHATIDYLINOSITOL 3,4,5-TRISPHOSPHATE 5-PHOSPHATASE 2"/>
    <property type="match status" value="1"/>
</dbReference>
<dbReference type="PANTHER" id="PTHR46051">
    <property type="entry name" value="SH2 DOMAIN-CONTAINING PROTEIN"/>
    <property type="match status" value="1"/>
</dbReference>
<dbReference type="Pfam" id="PF24147">
    <property type="entry name" value="C2_SHIP1-2_2nd"/>
    <property type="match status" value="1"/>
</dbReference>
<dbReference type="Pfam" id="PF24150">
    <property type="entry name" value="C2_SHIP1-2_first"/>
    <property type="match status" value="1"/>
</dbReference>
<dbReference type="Pfam" id="PF22669">
    <property type="entry name" value="Exo_endo_phos2"/>
    <property type="match status" value="1"/>
</dbReference>
<dbReference type="Pfam" id="PF00536">
    <property type="entry name" value="SAM_1"/>
    <property type="match status" value="1"/>
</dbReference>
<dbReference type="Pfam" id="PF00017">
    <property type="entry name" value="SH2"/>
    <property type="match status" value="1"/>
</dbReference>
<dbReference type="PRINTS" id="PR00401">
    <property type="entry name" value="SH2DOMAIN"/>
</dbReference>
<dbReference type="SMART" id="SM00128">
    <property type="entry name" value="IPPc"/>
    <property type="match status" value="1"/>
</dbReference>
<dbReference type="SMART" id="SM00454">
    <property type="entry name" value="SAM"/>
    <property type="match status" value="1"/>
</dbReference>
<dbReference type="SMART" id="SM00252">
    <property type="entry name" value="SH2"/>
    <property type="match status" value="1"/>
</dbReference>
<dbReference type="SUPFAM" id="SSF56219">
    <property type="entry name" value="DNase I-like"/>
    <property type="match status" value="1"/>
</dbReference>
<dbReference type="SUPFAM" id="SSF47769">
    <property type="entry name" value="SAM/Pointed domain"/>
    <property type="match status" value="1"/>
</dbReference>
<dbReference type="SUPFAM" id="SSF55550">
    <property type="entry name" value="SH2 domain"/>
    <property type="match status" value="1"/>
</dbReference>
<dbReference type="PROSITE" id="PS50105">
    <property type="entry name" value="SAM_DOMAIN"/>
    <property type="match status" value="1"/>
</dbReference>
<dbReference type="PROSITE" id="PS50001">
    <property type="entry name" value="SH2"/>
    <property type="match status" value="1"/>
</dbReference>
<accession>Q9WVR3</accession>
<accession>Q9R1V2</accession>
<comment type="function">
    <text evidence="3 4 5 10 11 13 14">Phosphatidylinositol (PtdIns) phosphatase that specifically hydrolyzes the 5-phosphate of phosphatidylinositol-3,4,5-trisphosphate (PtdIns(3,4,5)P3) to produce PtdIns(3,4)P2, thereby negatively regulating the PI3K (phosphoinositide 3-kinase) pathways (PubMed:11238900, PubMed:17535963). Required for correct mitotic spindle orientation and therefore progression of mitosis (By similarity). Plays a central role in regulation of PI3K-dependent insulin signaling, although the precise molecular mechanisms and signaling pathways remain unclear (PubMed:11238900). While overexpression reduces both insulin-stimulated MAP kinase and Akt activation, its absence does not affect insulin signaling or GLUT4 trafficking (PubMed:10381377, PubMed:12351701). Confers resistance to dietary obesity (By similarity). May act by regulating AKT2, but not AKT1, phosphorylation at the plasma membrane (By similarity). Part of a signaling pathway that regulates actin cytoskeleton remodeling (By similarity). Required for the maintenance and dynamic remodeling of actin structures as well as in endocytosis, having a major impact on ligand-induced EGFR internalization and degradation (By similarity). Participates in regulation of cortical and submembraneous actin by hydrolyzing PtdIns(3,4,5)P3 thereby regulating membrane ruffling (By similarity). Regulates cell adhesion and cell spreading (By similarity). Required for HGF-mediated lamellipodium formation, cell scattering and spreading (By similarity). Acts as a negative regulator of EPHA2 receptor endocytosis by inhibiting via PI3K-dependent Rac1 activation (By similarity). Acts as a regulator of neuritogenesis by regulating PtdIns(3,4,5)P3 level and is required to form an initial protrusive pattern, and later, maintain proper neurite outgrowth (PubMed:17535963). Acts as a negative regulator of the FC-gamma-RIIA receptor (FCGR2A) (By similarity). Mediates signaling from the FC-gamma-RIIB receptor (FCGR2B), playing a central role in terminating signal transduction from activating immune/hematopoietic cell receptor systems (By similarity). Involved in EGF signaling pathway (By similarity). Upon stimulation by EGF, it is recruited by EGFR and dephosphorylates PtdIns(3,4,5)P3 (By similarity). Plays a negative role in regulating the PI3K-PKB pathway, possibly by inhibiting PKB activity (By similarity). Down-regulates Fc-gamma-R-mediated phagocytosis in macrophages independently of INPP5D/SHIP1 (By similarity). In macrophages, down-regulates NF-kappa-B-dependent gene transcription by regulating macrophage colony-stimulating factor (M-CSF)-induced signaling (By similarity). Plays a role in the localization of AURKA and NEDD9/HEF1 to the basolateral membrane at interphase in polarized cysts, thereby mediates cell cycle homeostasis, cell polarization and cilia assembly (By similarity). Additionally promotion of cilia growth is also facilitated by hydrolysis of (PtdIns(3,4,5)P3) to PtdIns(3,4)P2 (By similarity). Promotes formation of apical membrane-initiation sites during the initial stages of lumen formation via Rho family-induced actin filament organization and CTNNB1 localization to cell-cell contacts (By similarity). May also hydrolyze PtdIns(1,3,4,5)P4, and could thus affect the levels of the higher inositol polyphosphates like InsP6. Involved in endochondral ossification (By similarity).</text>
</comment>
<comment type="catalytic activity">
    <reaction evidence="11">
        <text>a 1,2-diacyl-sn-glycero-3-phospho-(1D-myo-inositol-3,4,5-trisphosphate) + H2O = a 1,2-diacyl-sn-glycero-3-phospho-(1D-myo-inositol-3,4-bisphosphate) + phosphate</text>
        <dbReference type="Rhea" id="RHEA:25528"/>
        <dbReference type="ChEBI" id="CHEBI:15377"/>
        <dbReference type="ChEBI" id="CHEBI:43474"/>
        <dbReference type="ChEBI" id="CHEBI:57658"/>
        <dbReference type="ChEBI" id="CHEBI:57836"/>
        <dbReference type="EC" id="3.1.3.86"/>
    </reaction>
    <physiologicalReaction direction="left-to-right" evidence="17">
        <dbReference type="Rhea" id="RHEA:25529"/>
    </physiologicalReaction>
</comment>
<comment type="catalytic activity">
    <reaction evidence="4">
        <text>1,2-dioctanoyl-sn-glycero-3-phospho-(1D-myo-inositol-3,4,5-trisphosphate) + H2O = 1,2-dioctanoyl-sn-glycero-3-phospho-(1D-myo-inositol-3,4-bisphosphate) + phosphate</text>
        <dbReference type="Rhea" id="RHEA:43548"/>
        <dbReference type="ChEBI" id="CHEBI:15377"/>
        <dbReference type="ChEBI" id="CHEBI:43474"/>
        <dbReference type="ChEBI" id="CHEBI:83416"/>
        <dbReference type="ChEBI" id="CHEBI:83417"/>
    </reaction>
    <physiologicalReaction direction="left-to-right" evidence="4">
        <dbReference type="Rhea" id="RHEA:43549"/>
    </physiologicalReaction>
</comment>
<comment type="catalytic activity">
    <reaction evidence="4">
        <text>1,2-dihexadecanoyl-sn-glycero-3-phospho-(1D-myo-inositol-3,4,5-trisphosphate) + H2O = 1,2-dihexadecanoyl-sn-glycero-3-phospho-(1D-myo-inositol-3,4-bisphosphate) + phosphate</text>
        <dbReference type="Rhea" id="RHEA:43556"/>
        <dbReference type="ChEBI" id="CHEBI:15377"/>
        <dbReference type="ChEBI" id="CHEBI:43474"/>
        <dbReference type="ChEBI" id="CHEBI:83420"/>
        <dbReference type="ChEBI" id="CHEBI:83422"/>
    </reaction>
    <physiologicalReaction direction="left-to-right" evidence="4">
        <dbReference type="Rhea" id="RHEA:43557"/>
    </physiologicalReaction>
</comment>
<comment type="activity regulation">
    <text evidence="1">Activated upon translocation to the sites of synthesis of PtdIns(3,4,5)P3 in the membrane. Enzymatic activity is enhanced in the presence of phosphatidylserine (By similarity).</text>
</comment>
<comment type="subunit">
    <text evidence="3 4 5">Interacts with tyrosine phosphorylated form of SHC1 (By similarity). Interacts with EGFR (By similarity). Upon stimulation by the EGF signaling pathway, it forms a complex with SHC1 and EGFR (By similarity). Interacts with cytoskeletal protein SORBS3/vinexin, promoting its localization to the periphery of cells (By similarity). Forms a complex with filamin (FLNA or FLNB), actin, GPIb (GP1BA or GP1BB) that regulates cortical and submembraneous actin (By similarity). Interacts with c-Met/MET, when c-Met/MET is phosphorylated on 'Tyr-1356' (By similarity). Interacts with p130Cas/BCAR1 (By similarity). Interacts with CENTD3/ARAP3 via its SAM domain (By similarity). Interacts with c-Cbl/CBL and CAP/SORBS1 (By similarity). Interacts with activated EPHA2 receptor (By similarity). Interacts with receptors FCGR2A (By similarity). Interacts with FCGR2B (By similarity). Interacts with tyrosine kinase ABL1 (By similarity). Interacts with tyrosine kinase TEC (By similarity). Interacts with CSF1R (By similarity). Interacts (via N-terminus) with SH3YL1 (via SH3 domain) (By similarity). Interacts (via SH2 domain) with tyrosine phosphorylated KLRC1 (via ITIM) (By similarity). Interacts with NEDD9/HEF1 (By similarity).</text>
</comment>
<comment type="subcellular location">
    <subcellularLocation>
        <location evidence="13">Cytoplasm</location>
        <location evidence="13">Cytosol</location>
    </subcellularLocation>
    <subcellularLocation>
        <location evidence="1">Cytoplasm</location>
        <location evidence="1">Cytoskeleton</location>
    </subcellularLocation>
    <subcellularLocation>
        <location evidence="13">Membrane</location>
        <topology evidence="13">Peripheral membrane protein</topology>
    </subcellularLocation>
    <subcellularLocation>
        <location evidence="4">Cell projection</location>
        <location evidence="4">Filopodium</location>
    </subcellularLocation>
    <subcellularLocation>
        <location evidence="4">Cell projection</location>
        <location evidence="4">Lamellipodium</location>
    </subcellularLocation>
    <subcellularLocation>
        <location evidence="3">Basal cell membrane</location>
    </subcellularLocation>
    <subcellularLocation>
        <location evidence="2">Nucleus</location>
    </subcellularLocation>
    <subcellularLocation>
        <location evidence="2">Nucleus speckle</location>
    </subcellularLocation>
    <subcellularLocation>
        <location evidence="3">Cytoplasm</location>
        <location evidence="3">Cytoskeleton</location>
        <location evidence="3">Spindle pole</location>
    </subcellularLocation>
    <text>Translocates to membrane ruffles when activated, translocation is probably due to different mechanisms depending on the stimulus and cell type. Partly translocated via its SH2 domain which mediates interaction with tyrosine phosphorylated receptors such as the FC-gamma-RIIB receptor (FCGR2B). Tyrosine phosphorylation may also participate in membrane localization. Insulin specifically stimulates its redistribution from the cytosol to the plasma membrane. Recruited to the membrane following M-CSF stimulation. In activated spreading platelets, localizes with actin at filopodia, lamellipodia and the central actin ring.</text>
</comment>
<comment type="alternative products">
    <event type="alternative splicing"/>
    <isoform>
        <id>Q9WVR3-1</id>
        <name>1</name>
        <sequence type="displayed"/>
    </isoform>
    <isoform>
        <id>Q9WVR3-2</id>
        <name>2</name>
        <sequence type="described" ref="VSP_027986"/>
    </isoform>
</comment>
<comment type="domain">
    <text evidence="4">The SH2 domain interacts with tyrosine phosphorylated forms of proteins such as SHC1 or FCGR2A (By similarity). It also mediates the interaction with p130Cas/BCAR1 (By similarity).</text>
</comment>
<comment type="domain">
    <text evidence="6">The NPXY sequence motif found in many tyrosine-phosphorylated proteins is required for the specific binding of the PID domain.</text>
</comment>
<comment type="PTM">
    <text evidence="1">Tyrosine phosphorylated by the members of the SRC family after exposure to a diverse array of extracellular stimuli such as insulin, growth factors such as EGF or PDGF, chemokines, integrin ligands and hypertonic and oxidative stress. May be phosphorylated upon IgG receptor FCGR2B-binding. Phosphorylated at Tyr-987 following cell attachment and spreading. Phosphorylated at Tyr-1161 following EGF signaling pathway stimulation (By similarity).</text>
</comment>
<comment type="polymorphism">
    <text evidence="12">Variant Cys-1142 found in diabetic GK strain may be a cause of diabete in this strain. Genetic variations in Inppl1 may also be a cause of susceptibility to hypertension.</text>
</comment>
<comment type="similarity">
    <text evidence="16">Belongs to the inositol 1,4,5-trisphosphate 5-phosphatase family.</text>
</comment>
<feature type="chain" id="PRO_0000302872" description="Phosphatidylinositol 3,4,5-trisphosphate 5-phosphatase 2">
    <location>
        <begin position="1"/>
        <end position="1257"/>
    </location>
</feature>
<feature type="domain" description="SH2" evidence="8">
    <location>
        <begin position="21"/>
        <end position="117"/>
    </location>
</feature>
<feature type="domain" description="SAM" evidence="7">
    <location>
        <begin position="1195"/>
        <end position="1257"/>
    </location>
</feature>
<feature type="region of interest" description="Disordered" evidence="9">
    <location>
        <begin position="119"/>
        <end position="181"/>
    </location>
</feature>
<feature type="region of interest" description="Disordered" evidence="9">
    <location>
        <begin position="897"/>
        <end position="986"/>
    </location>
</feature>
<feature type="region of interest" description="Disordered" evidence="9">
    <location>
        <begin position="1004"/>
        <end position="1115"/>
    </location>
</feature>
<feature type="short sequence motif" description="SH3-binding">
    <location>
        <begin position="945"/>
        <end position="950"/>
    </location>
</feature>
<feature type="short sequence motif" description="NPXY motif">
    <location>
        <begin position="984"/>
        <end position="987"/>
    </location>
</feature>
<feature type="compositionally biased region" description="Basic and acidic residues" evidence="9">
    <location>
        <begin position="119"/>
        <end position="132"/>
    </location>
</feature>
<feature type="compositionally biased region" description="Pro residues" evidence="9">
    <location>
        <begin position="156"/>
        <end position="166"/>
    </location>
</feature>
<feature type="compositionally biased region" description="Pro residues" evidence="9">
    <location>
        <begin position="939"/>
        <end position="951"/>
    </location>
</feature>
<feature type="compositionally biased region" description="Basic and acidic residues" evidence="9">
    <location>
        <begin position="952"/>
        <end position="966"/>
    </location>
</feature>
<feature type="compositionally biased region" description="Pro residues" evidence="9">
    <location>
        <begin position="1049"/>
        <end position="1060"/>
    </location>
</feature>
<feature type="compositionally biased region" description="Pro residues" evidence="9">
    <location>
        <begin position="1088"/>
        <end position="1104"/>
    </location>
</feature>
<feature type="modified residue" description="Phosphoserine" evidence="19">
    <location>
        <position position="132"/>
    </location>
</feature>
<feature type="modified residue" description="Phosphothreonine" evidence="4">
    <location>
        <position position="165"/>
    </location>
</feature>
<feature type="modified residue" description="Phosphoserine" evidence="4">
    <location>
        <position position="241"/>
    </location>
</feature>
<feature type="modified residue" description="Phosphoserine" evidence="4">
    <location>
        <position position="353"/>
    </location>
</feature>
<feature type="modified residue" description="Phosphotyrosine" evidence="4">
    <location>
        <position position="887"/>
    </location>
</feature>
<feature type="modified residue" description="Phosphoserine" evidence="4">
    <location>
        <position position="891"/>
    </location>
</feature>
<feature type="modified residue" description="Phosphotyrosine" evidence="4">
    <location>
        <position position="987"/>
    </location>
</feature>
<feature type="modified residue" description="Phosphoserine" evidence="4">
    <location>
        <position position="1132"/>
    </location>
</feature>
<feature type="modified residue" description="Phosphotyrosine" evidence="4">
    <location>
        <position position="1136"/>
    </location>
</feature>
<feature type="modified residue" description="Phosphotyrosine" evidence="4">
    <location>
        <position position="1161"/>
    </location>
</feature>
<feature type="modified residue" description="Phosphoserine" evidence="4">
    <location>
        <position position="1256"/>
    </location>
</feature>
<feature type="splice variant" id="VSP_027986" description="In isoform 2." evidence="15">
    <location>
        <begin position="1184"/>
        <end position="1257"/>
    </location>
</feature>
<feature type="sequence variant" description="In strain: GK." evidence="12">
    <original>R</original>
    <variation>C</variation>
    <location>
        <position position="1142"/>
    </location>
</feature>
<feature type="mutagenesis site" description="Loss of phosphorylation following insulin stimulation." evidence="13">
    <original>Y</original>
    <variation>F</variation>
    <location>
        <position position="987"/>
    </location>
</feature>
<feature type="sequence conflict" description="In Ref. 1; BAA81818." evidence="16" ref="1">
    <original>S</original>
    <variation>N</variation>
    <location>
        <position position="910"/>
    </location>
</feature>
<feature type="sequence conflict" description="In Ref. 1; BAA81818." evidence="16" ref="1">
    <original>P</original>
    <variation>L</variation>
    <location>
        <position position="1009"/>
    </location>
</feature>
<name>SHIP2_RAT</name>
<sequence length="1257" mass="139143">MASVCGAPSPGGALGSQAPAWYHRDLSRAAAEELLARAGRDGSFLVRDSESVAGAFALCVLYQKHVHTYRILPDGEDFLAVQTSQGVPVRRFQTLGELIGLYAQPNQGLVCALLLPVEGEREPDPPDDRDASDVEDEKPPLPPRSGSTSISVPAGPSSPLPAPETPTTPAAESTPNGLSTVSHEYLKGSYGLDLEAVRGGASNLPHLTRTLVTSCRRLHSEVDKVLSGLEILSKVFDQQSSPMVTRLLQQQSLPQTGEQELESLVLKLSVLKDFLSGIQKKALKALQDMSSTAPPAPLQPSIRKAKTIPVQAFEVKLDVTLGDLTKIGKSQKFTLSVDVEGGRLVLLRRQRDSQEDWTTFTHDRIRQLIKSQRVQNKLGVVFEKEKDRTQRKDFIFVSARKREAFCQLLQLMKNKHSKQDEPDMISVFIGTWNMGSVPPPKNVTSWFTSKGLGKALDEVTVTIPHDIYVFGTQENSVGDREWLDLLRGGLKELTDLDYRPIAMQSLWNIKVAVLVKPEHENRISHVSTSSVKTGIANTLGNKGAVGVSFMFNGTSFGFVNCHLTSGNEKTTRRNQNYLDILRLLSLGDRQLSAFDISLRFTHLFWFGDLNYRLDMDIQEILNYISRREFEPLLRVDQLNLEREKHKVFLRFSEEEISFPPTYRYERGSRDTYAWHKQKPTGVRTNVPSWCDRILWKSYPETHIICNSYGCTDDIVTSDHSPVFGTFEVGVTSQFISKKGLSKTSDQAYIEFESIEAIVKTASRTKFFIEFYSTCLEEYKKSFENDAQSSDNINFLKVQWSSRQLPTLKPILADIEYLQDQHLLLTVKSMDGYESYGECVVALKSMIGSTAQQFLTFLSHRGEETGNIRGSMKVRVPTERLGTRERLYEWISIDKDDTGAKSKAPSVLRGSQEHRSGSRKPTSTEASCPLSKLFEEPEKPPPTGRPPAPPRAVPREESLNPRLKSEGTPEQEGVAAPPPKNSFNNPAYYVLEGVPHQLLPLEPTSFARAPIPPTTKNKVAITVPAPQLGRHRTPRVGEGSSSDEDSGGTLPPPDFPPPPLPDSAIFLPPNLDPLSMPVVRGRSVGEARGPPPPKAHPRPPLPPGTSPASTFLEEVASADDRSCSVLQMAKTLSEVDYSPGPGRSALLPNPLELQLPRGPSDYGRPLSFPPPRIRESIQEDLAEEAPCPQGGRASGLGEAGMGAWLRAIGLERYEEGLVHNGWDDLEFLSDITEEDLEEAGVQDPAHKRLLLDTLQLSK</sequence>